<proteinExistence type="inferred from homology"/>
<sequence length="38" mass="4265">MKVQASVKKICGSCKVIRRNGVIRVICSAEPRHKQRQG</sequence>
<reference key="1">
    <citation type="journal article" date="2008" name="Antimicrob. Agents Chemother.">
        <title>Whole-genome pyrosequencing of an epidemic multidrug-resistant Acinetobacter baumannii strain belonging to the European clone II group.</title>
        <authorList>
            <person name="Iacono M."/>
            <person name="Villa L."/>
            <person name="Fortini D."/>
            <person name="Bordoni R."/>
            <person name="Imperi F."/>
            <person name="Bonnal R.J."/>
            <person name="Sicheritz-Ponten T."/>
            <person name="De Bellis G."/>
            <person name="Visca P."/>
            <person name="Cassone A."/>
            <person name="Carattoli A."/>
        </authorList>
    </citation>
    <scope>NUCLEOTIDE SEQUENCE [LARGE SCALE GENOMIC DNA]</scope>
    <source>
        <strain>ACICU</strain>
    </source>
</reference>
<feature type="chain" id="PRO_0000344633" description="Large ribosomal subunit protein bL36">
    <location>
        <begin position="1"/>
        <end position="38"/>
    </location>
</feature>
<keyword id="KW-0687">Ribonucleoprotein</keyword>
<keyword id="KW-0689">Ribosomal protein</keyword>
<dbReference type="EMBL" id="CP000863">
    <property type="protein sequence ID" value="ACC58569.1"/>
    <property type="status" value="ALT_INIT"/>
    <property type="molecule type" value="Genomic_DNA"/>
</dbReference>
<dbReference type="RefSeq" id="WP_000867907.1">
    <property type="nucleotide sequence ID" value="NZ_CP031380.1"/>
</dbReference>
<dbReference type="SMR" id="B2HZ87"/>
<dbReference type="GeneID" id="97425220"/>
<dbReference type="KEGG" id="abc:ACICU_03257"/>
<dbReference type="HOGENOM" id="CLU_135723_6_2_6"/>
<dbReference type="Proteomes" id="UP000008839">
    <property type="component" value="Chromosome"/>
</dbReference>
<dbReference type="GO" id="GO:0005737">
    <property type="term" value="C:cytoplasm"/>
    <property type="evidence" value="ECO:0007669"/>
    <property type="project" value="UniProtKB-ARBA"/>
</dbReference>
<dbReference type="GO" id="GO:1990904">
    <property type="term" value="C:ribonucleoprotein complex"/>
    <property type="evidence" value="ECO:0007669"/>
    <property type="project" value="UniProtKB-KW"/>
</dbReference>
<dbReference type="GO" id="GO:0005840">
    <property type="term" value="C:ribosome"/>
    <property type="evidence" value="ECO:0007669"/>
    <property type="project" value="UniProtKB-KW"/>
</dbReference>
<dbReference type="GO" id="GO:0003735">
    <property type="term" value="F:structural constituent of ribosome"/>
    <property type="evidence" value="ECO:0007669"/>
    <property type="project" value="InterPro"/>
</dbReference>
<dbReference type="GO" id="GO:0006412">
    <property type="term" value="P:translation"/>
    <property type="evidence" value="ECO:0007669"/>
    <property type="project" value="UniProtKB-UniRule"/>
</dbReference>
<dbReference type="HAMAP" id="MF_00251">
    <property type="entry name" value="Ribosomal_bL36"/>
    <property type="match status" value="1"/>
</dbReference>
<dbReference type="InterPro" id="IPR000473">
    <property type="entry name" value="Ribosomal_bL36"/>
</dbReference>
<dbReference type="InterPro" id="IPR035977">
    <property type="entry name" value="Ribosomal_bL36_sp"/>
</dbReference>
<dbReference type="NCBIfam" id="TIGR01022">
    <property type="entry name" value="rpmJ_bact"/>
    <property type="match status" value="1"/>
</dbReference>
<dbReference type="PANTHER" id="PTHR42888">
    <property type="entry name" value="50S RIBOSOMAL PROTEIN L36, CHLOROPLASTIC"/>
    <property type="match status" value="1"/>
</dbReference>
<dbReference type="PANTHER" id="PTHR42888:SF1">
    <property type="entry name" value="LARGE RIBOSOMAL SUBUNIT PROTEIN BL36C"/>
    <property type="match status" value="1"/>
</dbReference>
<dbReference type="Pfam" id="PF00444">
    <property type="entry name" value="Ribosomal_L36"/>
    <property type="match status" value="1"/>
</dbReference>
<dbReference type="SUPFAM" id="SSF57840">
    <property type="entry name" value="Ribosomal protein L36"/>
    <property type="match status" value="1"/>
</dbReference>
<dbReference type="PROSITE" id="PS00828">
    <property type="entry name" value="RIBOSOMAL_L36"/>
    <property type="match status" value="1"/>
</dbReference>
<gene>
    <name evidence="1" type="primary">rpmJ</name>
    <name type="ordered locus">ACICU_03257</name>
</gene>
<accession>B2HZ87</accession>
<organism>
    <name type="scientific">Acinetobacter baumannii (strain ACICU)</name>
    <dbReference type="NCBI Taxonomy" id="405416"/>
    <lineage>
        <taxon>Bacteria</taxon>
        <taxon>Pseudomonadati</taxon>
        <taxon>Pseudomonadota</taxon>
        <taxon>Gammaproteobacteria</taxon>
        <taxon>Moraxellales</taxon>
        <taxon>Moraxellaceae</taxon>
        <taxon>Acinetobacter</taxon>
        <taxon>Acinetobacter calcoaceticus/baumannii complex</taxon>
    </lineage>
</organism>
<evidence type="ECO:0000255" key="1">
    <source>
        <dbReference type="HAMAP-Rule" id="MF_00251"/>
    </source>
</evidence>
<evidence type="ECO:0000305" key="2"/>
<name>RL36_ACIBC</name>
<protein>
    <recommendedName>
        <fullName evidence="1">Large ribosomal subunit protein bL36</fullName>
    </recommendedName>
    <alternativeName>
        <fullName evidence="2">50S ribosomal protein L36</fullName>
    </alternativeName>
</protein>
<comment type="similarity">
    <text evidence="1">Belongs to the bacterial ribosomal protein bL36 family.</text>
</comment>
<comment type="sequence caution" evidence="2">
    <conflict type="erroneous initiation">
        <sequence resource="EMBL-CDS" id="ACC58569"/>
    </conflict>
</comment>